<dbReference type="EC" id="2.1.2.9" evidence="1"/>
<dbReference type="EMBL" id="CP000747">
    <property type="protein sequence ID" value="ACG76791.1"/>
    <property type="molecule type" value="Genomic_DNA"/>
</dbReference>
<dbReference type="RefSeq" id="WP_012520939.1">
    <property type="nucleotide sequence ID" value="NC_011144.1"/>
</dbReference>
<dbReference type="SMR" id="B4RDU2"/>
<dbReference type="STRING" id="450851.PHZ_c0377"/>
<dbReference type="KEGG" id="pzu:PHZ_c0377"/>
<dbReference type="eggNOG" id="COG0223">
    <property type="taxonomic scope" value="Bacteria"/>
</dbReference>
<dbReference type="HOGENOM" id="CLU_033347_1_2_5"/>
<dbReference type="OrthoDB" id="9802815at2"/>
<dbReference type="Proteomes" id="UP000001868">
    <property type="component" value="Chromosome"/>
</dbReference>
<dbReference type="GO" id="GO:0005829">
    <property type="term" value="C:cytosol"/>
    <property type="evidence" value="ECO:0007669"/>
    <property type="project" value="TreeGrafter"/>
</dbReference>
<dbReference type="GO" id="GO:0004479">
    <property type="term" value="F:methionyl-tRNA formyltransferase activity"/>
    <property type="evidence" value="ECO:0007669"/>
    <property type="project" value="UniProtKB-UniRule"/>
</dbReference>
<dbReference type="CDD" id="cd08646">
    <property type="entry name" value="FMT_core_Met-tRNA-FMT_N"/>
    <property type="match status" value="1"/>
</dbReference>
<dbReference type="CDD" id="cd08704">
    <property type="entry name" value="Met_tRNA_FMT_C"/>
    <property type="match status" value="1"/>
</dbReference>
<dbReference type="Gene3D" id="3.40.50.12230">
    <property type="match status" value="1"/>
</dbReference>
<dbReference type="HAMAP" id="MF_00182">
    <property type="entry name" value="Formyl_trans"/>
    <property type="match status" value="1"/>
</dbReference>
<dbReference type="InterPro" id="IPR005794">
    <property type="entry name" value="Fmt"/>
</dbReference>
<dbReference type="InterPro" id="IPR005793">
    <property type="entry name" value="Formyl_trans_C"/>
</dbReference>
<dbReference type="InterPro" id="IPR002376">
    <property type="entry name" value="Formyl_transf_N"/>
</dbReference>
<dbReference type="InterPro" id="IPR036477">
    <property type="entry name" value="Formyl_transf_N_sf"/>
</dbReference>
<dbReference type="InterPro" id="IPR011034">
    <property type="entry name" value="Formyl_transferase-like_C_sf"/>
</dbReference>
<dbReference type="InterPro" id="IPR044135">
    <property type="entry name" value="Met-tRNA-FMT_C"/>
</dbReference>
<dbReference type="InterPro" id="IPR041711">
    <property type="entry name" value="Met-tRNA-FMT_N"/>
</dbReference>
<dbReference type="NCBIfam" id="TIGR00460">
    <property type="entry name" value="fmt"/>
    <property type="match status" value="1"/>
</dbReference>
<dbReference type="PANTHER" id="PTHR11138">
    <property type="entry name" value="METHIONYL-TRNA FORMYLTRANSFERASE"/>
    <property type="match status" value="1"/>
</dbReference>
<dbReference type="PANTHER" id="PTHR11138:SF5">
    <property type="entry name" value="METHIONYL-TRNA FORMYLTRANSFERASE, MITOCHONDRIAL"/>
    <property type="match status" value="1"/>
</dbReference>
<dbReference type="Pfam" id="PF02911">
    <property type="entry name" value="Formyl_trans_C"/>
    <property type="match status" value="1"/>
</dbReference>
<dbReference type="Pfam" id="PF00551">
    <property type="entry name" value="Formyl_trans_N"/>
    <property type="match status" value="1"/>
</dbReference>
<dbReference type="SUPFAM" id="SSF50486">
    <property type="entry name" value="FMT C-terminal domain-like"/>
    <property type="match status" value="1"/>
</dbReference>
<dbReference type="SUPFAM" id="SSF53328">
    <property type="entry name" value="Formyltransferase"/>
    <property type="match status" value="1"/>
</dbReference>
<feature type="chain" id="PRO_1000098424" description="Methionyl-tRNA formyltransferase">
    <location>
        <begin position="1"/>
        <end position="308"/>
    </location>
</feature>
<feature type="binding site" evidence="1">
    <location>
        <begin position="109"/>
        <end position="112"/>
    </location>
    <ligand>
        <name>(6S)-5,6,7,8-tetrahydrofolate</name>
        <dbReference type="ChEBI" id="CHEBI:57453"/>
    </ligand>
</feature>
<evidence type="ECO:0000255" key="1">
    <source>
        <dbReference type="HAMAP-Rule" id="MF_00182"/>
    </source>
</evidence>
<gene>
    <name evidence="1" type="primary">fmt</name>
    <name type="ordered locus">PHZ_c0377</name>
</gene>
<protein>
    <recommendedName>
        <fullName evidence="1">Methionyl-tRNA formyltransferase</fullName>
        <ecNumber evidence="1">2.1.2.9</ecNumber>
    </recommendedName>
</protein>
<name>FMT_PHEZH</name>
<sequence length="308" mass="32688">MRLAFLGTPDFAVQALAEIVEAGHEVACVYSQPPAPRGRGHELRPSPVHAYAESRGIPVRTPASMRDPAEIEAFRALGLDAAVVVAFGQILPREVLEAPRLGSFNVHASLLPRWRGAAPIQRAIMAGDAVTGVQVMRMTEGLDEGPVLSTATVRIDALETAATLHDRLAAAGAGLIVETLAQIAAGRAVETPQAEAGVTYAKKIRPKEARIDWTRPGPEVDRKIRGLSPFPGAWFELPTEKGPVRVKALLSAFEDAEGPAGETLDDRLLVGTGHGAVRLLRVQREGRGPQDAEAFLRGTAVPAGVKLS</sequence>
<keyword id="KW-0648">Protein biosynthesis</keyword>
<keyword id="KW-1185">Reference proteome</keyword>
<keyword id="KW-0808">Transferase</keyword>
<accession>B4RDU2</accession>
<proteinExistence type="inferred from homology"/>
<organism>
    <name type="scientific">Phenylobacterium zucineum (strain HLK1)</name>
    <dbReference type="NCBI Taxonomy" id="450851"/>
    <lineage>
        <taxon>Bacteria</taxon>
        <taxon>Pseudomonadati</taxon>
        <taxon>Pseudomonadota</taxon>
        <taxon>Alphaproteobacteria</taxon>
        <taxon>Caulobacterales</taxon>
        <taxon>Caulobacteraceae</taxon>
        <taxon>Phenylobacterium</taxon>
    </lineage>
</organism>
<comment type="function">
    <text evidence="1">Attaches a formyl group to the free amino group of methionyl-tRNA(fMet). The formyl group appears to play a dual role in the initiator identity of N-formylmethionyl-tRNA by promoting its recognition by IF2 and preventing the misappropriation of this tRNA by the elongation apparatus.</text>
</comment>
<comment type="catalytic activity">
    <reaction evidence="1">
        <text>L-methionyl-tRNA(fMet) + (6R)-10-formyltetrahydrofolate = N-formyl-L-methionyl-tRNA(fMet) + (6S)-5,6,7,8-tetrahydrofolate + H(+)</text>
        <dbReference type="Rhea" id="RHEA:24380"/>
        <dbReference type="Rhea" id="RHEA-COMP:9952"/>
        <dbReference type="Rhea" id="RHEA-COMP:9953"/>
        <dbReference type="ChEBI" id="CHEBI:15378"/>
        <dbReference type="ChEBI" id="CHEBI:57453"/>
        <dbReference type="ChEBI" id="CHEBI:78530"/>
        <dbReference type="ChEBI" id="CHEBI:78844"/>
        <dbReference type="ChEBI" id="CHEBI:195366"/>
        <dbReference type="EC" id="2.1.2.9"/>
    </reaction>
</comment>
<comment type="similarity">
    <text evidence="1">Belongs to the Fmt family.</text>
</comment>
<reference key="1">
    <citation type="journal article" date="2008" name="BMC Genomics">
        <title>Complete genome of Phenylobacterium zucineum - a novel facultative intracellular bacterium isolated from human erythroleukemia cell line K562.</title>
        <authorList>
            <person name="Luo Y."/>
            <person name="Xu X."/>
            <person name="Ding Z."/>
            <person name="Liu Z."/>
            <person name="Zhang B."/>
            <person name="Yan Z."/>
            <person name="Sun J."/>
            <person name="Hu S."/>
            <person name="Hu X."/>
        </authorList>
    </citation>
    <scope>NUCLEOTIDE SEQUENCE [LARGE SCALE GENOMIC DNA]</scope>
    <source>
        <strain>HLK1</strain>
    </source>
</reference>